<organism>
    <name type="scientific">Dechloromonas aromatica (strain RCB)</name>
    <dbReference type="NCBI Taxonomy" id="159087"/>
    <lineage>
        <taxon>Bacteria</taxon>
        <taxon>Pseudomonadati</taxon>
        <taxon>Pseudomonadota</taxon>
        <taxon>Betaproteobacteria</taxon>
        <taxon>Rhodocyclales</taxon>
        <taxon>Azonexaceae</taxon>
        <taxon>Dechloromonas</taxon>
    </lineage>
</organism>
<feature type="chain" id="PRO_0000258146" description="Large ribosomal subunit protein uL11">
    <location>
        <begin position="1"/>
        <end position="143"/>
    </location>
</feature>
<reference key="1">
    <citation type="journal article" date="2009" name="BMC Genomics">
        <title>Metabolic analysis of the soil microbe Dechloromonas aromatica str. RCB: indications of a surprisingly complex life-style and cryptic anaerobic pathways for aromatic degradation.</title>
        <authorList>
            <person name="Salinero K.K."/>
            <person name="Keller K."/>
            <person name="Feil W.S."/>
            <person name="Feil H."/>
            <person name="Trong S."/>
            <person name="Di Bartolo G."/>
            <person name="Lapidus A."/>
        </authorList>
    </citation>
    <scope>NUCLEOTIDE SEQUENCE [LARGE SCALE GENOMIC DNA]</scope>
    <source>
        <strain>RCB</strain>
    </source>
</reference>
<evidence type="ECO:0000255" key="1">
    <source>
        <dbReference type="HAMAP-Rule" id="MF_00736"/>
    </source>
</evidence>
<evidence type="ECO:0000305" key="2"/>
<gene>
    <name evidence="1" type="primary">rplK</name>
    <name type="ordered locus">Daro_0308</name>
</gene>
<name>RL11_DECAR</name>
<accession>Q47JB4</accession>
<comment type="function">
    <text evidence="1">Forms part of the ribosomal stalk which helps the ribosome interact with GTP-bound translation factors.</text>
</comment>
<comment type="subunit">
    <text evidence="1">Part of the ribosomal stalk of the 50S ribosomal subunit. Interacts with L10 and the large rRNA to form the base of the stalk. L10 forms an elongated spine to which L12 dimers bind in a sequential fashion forming a multimeric L10(L12)X complex.</text>
</comment>
<comment type="PTM">
    <text evidence="1">One or more lysine residues are methylated.</text>
</comment>
<comment type="similarity">
    <text evidence="1">Belongs to the universal ribosomal protein uL11 family.</text>
</comment>
<protein>
    <recommendedName>
        <fullName evidence="1">Large ribosomal subunit protein uL11</fullName>
    </recommendedName>
    <alternativeName>
        <fullName evidence="2">50S ribosomal protein L11</fullName>
    </alternativeName>
</protein>
<dbReference type="EMBL" id="CP000089">
    <property type="protein sequence ID" value="AAZ45067.1"/>
    <property type="molecule type" value="Genomic_DNA"/>
</dbReference>
<dbReference type="SMR" id="Q47JB4"/>
<dbReference type="STRING" id="159087.Daro_0308"/>
<dbReference type="KEGG" id="dar:Daro_0308"/>
<dbReference type="eggNOG" id="COG0080">
    <property type="taxonomic scope" value="Bacteria"/>
</dbReference>
<dbReference type="HOGENOM" id="CLU_074237_2_0_4"/>
<dbReference type="OrthoDB" id="9802408at2"/>
<dbReference type="GO" id="GO:0022625">
    <property type="term" value="C:cytosolic large ribosomal subunit"/>
    <property type="evidence" value="ECO:0007669"/>
    <property type="project" value="TreeGrafter"/>
</dbReference>
<dbReference type="GO" id="GO:0070180">
    <property type="term" value="F:large ribosomal subunit rRNA binding"/>
    <property type="evidence" value="ECO:0007669"/>
    <property type="project" value="UniProtKB-UniRule"/>
</dbReference>
<dbReference type="GO" id="GO:0003735">
    <property type="term" value="F:structural constituent of ribosome"/>
    <property type="evidence" value="ECO:0007669"/>
    <property type="project" value="InterPro"/>
</dbReference>
<dbReference type="GO" id="GO:0006412">
    <property type="term" value="P:translation"/>
    <property type="evidence" value="ECO:0007669"/>
    <property type="project" value="UniProtKB-UniRule"/>
</dbReference>
<dbReference type="CDD" id="cd00349">
    <property type="entry name" value="Ribosomal_L11"/>
    <property type="match status" value="1"/>
</dbReference>
<dbReference type="FunFam" id="1.10.10.250:FF:000001">
    <property type="entry name" value="50S ribosomal protein L11"/>
    <property type="match status" value="1"/>
</dbReference>
<dbReference type="FunFam" id="3.30.1550.10:FF:000001">
    <property type="entry name" value="50S ribosomal protein L11"/>
    <property type="match status" value="1"/>
</dbReference>
<dbReference type="Gene3D" id="1.10.10.250">
    <property type="entry name" value="Ribosomal protein L11, C-terminal domain"/>
    <property type="match status" value="1"/>
</dbReference>
<dbReference type="Gene3D" id="3.30.1550.10">
    <property type="entry name" value="Ribosomal protein L11/L12, N-terminal domain"/>
    <property type="match status" value="1"/>
</dbReference>
<dbReference type="HAMAP" id="MF_00736">
    <property type="entry name" value="Ribosomal_uL11"/>
    <property type="match status" value="1"/>
</dbReference>
<dbReference type="InterPro" id="IPR000911">
    <property type="entry name" value="Ribosomal_uL11"/>
</dbReference>
<dbReference type="InterPro" id="IPR006519">
    <property type="entry name" value="Ribosomal_uL11_bac-typ"/>
</dbReference>
<dbReference type="InterPro" id="IPR020783">
    <property type="entry name" value="Ribosomal_uL11_C"/>
</dbReference>
<dbReference type="InterPro" id="IPR036769">
    <property type="entry name" value="Ribosomal_uL11_C_sf"/>
</dbReference>
<dbReference type="InterPro" id="IPR020785">
    <property type="entry name" value="Ribosomal_uL11_CS"/>
</dbReference>
<dbReference type="InterPro" id="IPR020784">
    <property type="entry name" value="Ribosomal_uL11_N"/>
</dbReference>
<dbReference type="InterPro" id="IPR036796">
    <property type="entry name" value="Ribosomal_uL11_N_sf"/>
</dbReference>
<dbReference type="NCBIfam" id="TIGR01632">
    <property type="entry name" value="L11_bact"/>
    <property type="match status" value="1"/>
</dbReference>
<dbReference type="PANTHER" id="PTHR11661">
    <property type="entry name" value="60S RIBOSOMAL PROTEIN L12"/>
    <property type="match status" value="1"/>
</dbReference>
<dbReference type="PANTHER" id="PTHR11661:SF1">
    <property type="entry name" value="LARGE RIBOSOMAL SUBUNIT PROTEIN UL11M"/>
    <property type="match status" value="1"/>
</dbReference>
<dbReference type="Pfam" id="PF00298">
    <property type="entry name" value="Ribosomal_L11"/>
    <property type="match status" value="1"/>
</dbReference>
<dbReference type="Pfam" id="PF03946">
    <property type="entry name" value="Ribosomal_L11_N"/>
    <property type="match status" value="1"/>
</dbReference>
<dbReference type="SMART" id="SM00649">
    <property type="entry name" value="RL11"/>
    <property type="match status" value="1"/>
</dbReference>
<dbReference type="SUPFAM" id="SSF54747">
    <property type="entry name" value="Ribosomal L11/L12e N-terminal domain"/>
    <property type="match status" value="1"/>
</dbReference>
<dbReference type="SUPFAM" id="SSF46906">
    <property type="entry name" value="Ribosomal protein L11, C-terminal domain"/>
    <property type="match status" value="1"/>
</dbReference>
<dbReference type="PROSITE" id="PS00359">
    <property type="entry name" value="RIBOSOMAL_L11"/>
    <property type="match status" value="1"/>
</dbReference>
<sequence length="143" mass="14916">MAKKIIGYIKLQVPAGKANPSPPIGPALGQRGLNIMEFCKAFNAQTQGVEPGLPIPVVITAFADKSFTFVMKTPPATILIKKAAGIKSGSAKPHTDKVGKITRAQCEEIAKTKSPDLTAADMEAAIRTIAGSARSMGITVEGL</sequence>
<proteinExistence type="inferred from homology"/>
<keyword id="KW-0488">Methylation</keyword>
<keyword id="KW-0687">Ribonucleoprotein</keyword>
<keyword id="KW-0689">Ribosomal protein</keyword>
<keyword id="KW-0694">RNA-binding</keyword>
<keyword id="KW-0699">rRNA-binding</keyword>